<protein>
    <recommendedName>
        <fullName evidence="1">Large ribosomal subunit protein bL17</fullName>
    </recommendedName>
    <alternativeName>
        <fullName evidence="2">50S ribosomal protein L17</fullName>
    </alternativeName>
</protein>
<sequence>MRHKKRGRRLSRDTSHRQAMIKNMLVSLFKHERIETTVPRAKELRPVAEKVITLGKRGDLHARRQALSILNGDKEVVHKLFTDLAERNKDRQGGYTRILKTRFRYGDCAPMSFIELVERDATSAAE</sequence>
<proteinExistence type="inferred from homology"/>
<comment type="subunit">
    <text evidence="1">Part of the 50S ribosomal subunit. Contacts protein L32.</text>
</comment>
<comment type="similarity">
    <text evidence="1">Belongs to the bacterial ribosomal protein bL17 family.</text>
</comment>
<dbReference type="EMBL" id="CP000471">
    <property type="protein sequence ID" value="ABK43392.1"/>
    <property type="molecule type" value="Genomic_DNA"/>
</dbReference>
<dbReference type="RefSeq" id="WP_011712551.1">
    <property type="nucleotide sequence ID" value="NC_008576.1"/>
</dbReference>
<dbReference type="SMR" id="A0L5Z9"/>
<dbReference type="STRING" id="156889.Mmc1_0873"/>
<dbReference type="KEGG" id="mgm:Mmc1_0873"/>
<dbReference type="eggNOG" id="COG0203">
    <property type="taxonomic scope" value="Bacteria"/>
</dbReference>
<dbReference type="HOGENOM" id="CLU_074407_2_2_5"/>
<dbReference type="OrthoDB" id="9809073at2"/>
<dbReference type="Proteomes" id="UP000002586">
    <property type="component" value="Chromosome"/>
</dbReference>
<dbReference type="GO" id="GO:0022625">
    <property type="term" value="C:cytosolic large ribosomal subunit"/>
    <property type="evidence" value="ECO:0007669"/>
    <property type="project" value="TreeGrafter"/>
</dbReference>
<dbReference type="GO" id="GO:0003735">
    <property type="term" value="F:structural constituent of ribosome"/>
    <property type="evidence" value="ECO:0007669"/>
    <property type="project" value="InterPro"/>
</dbReference>
<dbReference type="GO" id="GO:0006412">
    <property type="term" value="P:translation"/>
    <property type="evidence" value="ECO:0007669"/>
    <property type="project" value="UniProtKB-UniRule"/>
</dbReference>
<dbReference type="FunFam" id="3.90.1030.10:FF:000001">
    <property type="entry name" value="50S ribosomal protein L17"/>
    <property type="match status" value="1"/>
</dbReference>
<dbReference type="Gene3D" id="3.90.1030.10">
    <property type="entry name" value="Ribosomal protein L17"/>
    <property type="match status" value="1"/>
</dbReference>
<dbReference type="HAMAP" id="MF_01368">
    <property type="entry name" value="Ribosomal_bL17"/>
    <property type="match status" value="1"/>
</dbReference>
<dbReference type="InterPro" id="IPR000456">
    <property type="entry name" value="Ribosomal_bL17"/>
</dbReference>
<dbReference type="InterPro" id="IPR047859">
    <property type="entry name" value="Ribosomal_bL17_CS"/>
</dbReference>
<dbReference type="InterPro" id="IPR036373">
    <property type="entry name" value="Ribosomal_bL17_sf"/>
</dbReference>
<dbReference type="NCBIfam" id="TIGR00059">
    <property type="entry name" value="L17"/>
    <property type="match status" value="1"/>
</dbReference>
<dbReference type="PANTHER" id="PTHR14413:SF16">
    <property type="entry name" value="LARGE RIBOSOMAL SUBUNIT PROTEIN BL17M"/>
    <property type="match status" value="1"/>
</dbReference>
<dbReference type="PANTHER" id="PTHR14413">
    <property type="entry name" value="RIBOSOMAL PROTEIN L17"/>
    <property type="match status" value="1"/>
</dbReference>
<dbReference type="Pfam" id="PF01196">
    <property type="entry name" value="Ribosomal_L17"/>
    <property type="match status" value="1"/>
</dbReference>
<dbReference type="SUPFAM" id="SSF64263">
    <property type="entry name" value="Prokaryotic ribosomal protein L17"/>
    <property type="match status" value="1"/>
</dbReference>
<dbReference type="PROSITE" id="PS01167">
    <property type="entry name" value="RIBOSOMAL_L17"/>
    <property type="match status" value="1"/>
</dbReference>
<reference key="1">
    <citation type="journal article" date="2009" name="Appl. Environ. Microbiol.">
        <title>Complete genome sequence of the chemolithoautotrophic marine magnetotactic coccus strain MC-1.</title>
        <authorList>
            <person name="Schubbe S."/>
            <person name="Williams T.J."/>
            <person name="Xie G."/>
            <person name="Kiss H.E."/>
            <person name="Brettin T.S."/>
            <person name="Martinez D."/>
            <person name="Ross C.A."/>
            <person name="Schuler D."/>
            <person name="Cox B.L."/>
            <person name="Nealson K.H."/>
            <person name="Bazylinski D.A."/>
        </authorList>
    </citation>
    <scope>NUCLEOTIDE SEQUENCE [LARGE SCALE GENOMIC DNA]</scope>
    <source>
        <strain>ATCC BAA-1437 / JCM 17883 / MC-1</strain>
    </source>
</reference>
<organism>
    <name type="scientific">Magnetococcus marinus (strain ATCC BAA-1437 / JCM 17883 / MC-1)</name>
    <dbReference type="NCBI Taxonomy" id="156889"/>
    <lineage>
        <taxon>Bacteria</taxon>
        <taxon>Pseudomonadati</taxon>
        <taxon>Pseudomonadota</taxon>
        <taxon>Alphaproteobacteria</taxon>
        <taxon>Magnetococcales</taxon>
        <taxon>Magnetococcaceae</taxon>
        <taxon>Magnetococcus</taxon>
    </lineage>
</organism>
<gene>
    <name evidence="1" type="primary">rplQ</name>
    <name type="ordered locus">Mmc1_0873</name>
</gene>
<accession>A0L5Z9</accession>
<evidence type="ECO:0000255" key="1">
    <source>
        <dbReference type="HAMAP-Rule" id="MF_01368"/>
    </source>
</evidence>
<evidence type="ECO:0000305" key="2"/>
<feature type="chain" id="PRO_1000055867" description="Large ribosomal subunit protein bL17">
    <location>
        <begin position="1"/>
        <end position="126"/>
    </location>
</feature>
<keyword id="KW-1185">Reference proteome</keyword>
<keyword id="KW-0687">Ribonucleoprotein</keyword>
<keyword id="KW-0689">Ribosomal protein</keyword>
<name>RL17_MAGMM</name>